<dbReference type="PIR" id="C61589">
    <property type="entry name" value="C61589"/>
</dbReference>
<dbReference type="SMR" id="P52246"/>
<dbReference type="GO" id="GO:0005576">
    <property type="term" value="C:extracellular region"/>
    <property type="evidence" value="ECO:0007669"/>
    <property type="project" value="UniProtKB-SubCell"/>
</dbReference>
<dbReference type="GO" id="GO:0004867">
    <property type="term" value="F:serine-type endopeptidase inhibitor activity"/>
    <property type="evidence" value="ECO:0007669"/>
    <property type="project" value="UniProtKB-KW"/>
</dbReference>
<dbReference type="CDD" id="cd00104">
    <property type="entry name" value="KAZAL_FS"/>
    <property type="match status" value="1"/>
</dbReference>
<dbReference type="FunFam" id="3.30.60.30:FF:000037">
    <property type="entry name" value="Ovomucoid"/>
    <property type="match status" value="1"/>
</dbReference>
<dbReference type="Gene3D" id="3.30.60.30">
    <property type="match status" value="1"/>
</dbReference>
<dbReference type="InterPro" id="IPR050159">
    <property type="entry name" value="Kazal-type_SerProtInhib"/>
</dbReference>
<dbReference type="InterPro" id="IPR002350">
    <property type="entry name" value="Kazal_dom"/>
</dbReference>
<dbReference type="InterPro" id="IPR036058">
    <property type="entry name" value="Kazal_dom_sf"/>
</dbReference>
<dbReference type="InterPro" id="IPR001239">
    <property type="entry name" value="Prot_inh_Kazal-m"/>
</dbReference>
<dbReference type="PANTHER" id="PTHR47499:SF1">
    <property type="entry name" value="SERINE PROTEASE INHIBITOR KAZAL-TYPE 7"/>
    <property type="match status" value="1"/>
</dbReference>
<dbReference type="PANTHER" id="PTHR47499">
    <property type="entry name" value="SERINE PROTEASE INHIBITOR KAZAL-TYPE 7 SPINK7"/>
    <property type="match status" value="1"/>
</dbReference>
<dbReference type="Pfam" id="PF00050">
    <property type="entry name" value="Kazal_1"/>
    <property type="match status" value="1"/>
</dbReference>
<dbReference type="PRINTS" id="PR00290">
    <property type="entry name" value="KAZALINHBTR"/>
</dbReference>
<dbReference type="SMART" id="SM00280">
    <property type="entry name" value="KAZAL"/>
    <property type="match status" value="1"/>
</dbReference>
<dbReference type="SUPFAM" id="SSF100895">
    <property type="entry name" value="Kazal-type serine protease inhibitors"/>
    <property type="match status" value="1"/>
</dbReference>
<dbReference type="PROSITE" id="PS00282">
    <property type="entry name" value="KAZAL_1"/>
    <property type="match status" value="1"/>
</dbReference>
<dbReference type="PROSITE" id="PS51465">
    <property type="entry name" value="KAZAL_2"/>
    <property type="match status" value="1"/>
</dbReference>
<evidence type="ECO:0000255" key="1">
    <source>
        <dbReference type="PROSITE-ProRule" id="PRU00798"/>
    </source>
</evidence>
<organism>
    <name type="scientific">Guira guira</name>
    <name type="common">Guira cuckoo</name>
    <dbReference type="NCBI Taxonomy" id="30392"/>
    <lineage>
        <taxon>Eukaryota</taxon>
        <taxon>Metazoa</taxon>
        <taxon>Chordata</taxon>
        <taxon>Craniata</taxon>
        <taxon>Vertebrata</taxon>
        <taxon>Euteleostomi</taxon>
        <taxon>Archelosauria</taxon>
        <taxon>Archosauria</taxon>
        <taxon>Dinosauria</taxon>
        <taxon>Saurischia</taxon>
        <taxon>Theropoda</taxon>
        <taxon>Coelurosauria</taxon>
        <taxon>Aves</taxon>
        <taxon>Neognathae</taxon>
        <taxon>Neoaves</taxon>
        <taxon>Otidimorphae</taxon>
        <taxon>Cuculiformes</taxon>
        <taxon>Crotophagidae</taxon>
        <taxon>Guira</taxon>
    </lineage>
</organism>
<sequence>ITTVDCSDYPKPVCSLEYMPLCGSDNKTYGNKCNFCNAVADSNGTLTLSHFGKC</sequence>
<name>IOVO_GUIGU</name>
<comment type="subcellular location">
    <subcellularLocation>
        <location>Secreted</location>
    </subcellularLocation>
</comment>
<comment type="domain">
    <text>Avian ovomucoid consists of three homologous, tandem Kazal family inhibitory domains.</text>
</comment>
<keyword id="KW-0903">Direct protein sequencing</keyword>
<keyword id="KW-1015">Disulfide bond</keyword>
<keyword id="KW-0325">Glycoprotein</keyword>
<keyword id="KW-0646">Protease inhibitor</keyword>
<keyword id="KW-0677">Repeat</keyword>
<keyword id="KW-0964">Secreted</keyword>
<keyword id="KW-0722">Serine protease inhibitor</keyword>
<feature type="chain" id="PRO_0000073121" description="Ovomucoid">
    <location>
        <begin position="1" status="less than"/>
        <end position="54" status="greater than"/>
    </location>
</feature>
<feature type="domain" description="Kazal-like" evidence="1">
    <location>
        <begin position="4"/>
        <end position="54"/>
    </location>
</feature>
<feature type="site" description="Reactive bond 3">
    <location>
        <begin position="16"/>
        <end position="17"/>
    </location>
</feature>
<feature type="glycosylation site" description="N-linked (GlcNAc...) asparagine">
    <location>
        <position position="43"/>
    </location>
</feature>
<feature type="disulfide bond">
    <location>
        <begin position="6"/>
        <end position="36"/>
    </location>
</feature>
<feature type="disulfide bond">
    <location>
        <begin position="14"/>
        <end position="33"/>
    </location>
</feature>
<feature type="disulfide bond">
    <location>
        <begin position="22"/>
        <end position="54"/>
    </location>
</feature>
<feature type="non-terminal residue">
    <location>
        <position position="1"/>
    </location>
</feature>
<feature type="non-terminal residue">
    <location>
        <position position="54"/>
    </location>
</feature>
<protein>
    <recommendedName>
        <fullName>Ovomucoid</fullName>
    </recommendedName>
</protein>
<accession>P52246</accession>
<reference key="1">
    <citation type="journal article" date="1993" name="J. Protein Chem.">
        <title>Amino acid sequences of ovomucoid third domains from 27 additional species of birds.</title>
        <authorList>
            <person name="Apostol I."/>
            <person name="Giletto A."/>
            <person name="Komiyama T."/>
            <person name="Zhang W."/>
            <person name="Laskowski M. Jr."/>
        </authorList>
    </citation>
    <scope>PROTEIN SEQUENCE</scope>
</reference>
<proteinExistence type="evidence at protein level"/>